<organism>
    <name type="scientific">Cereibacter sphaeroides (strain ATCC 17023 / DSM 158 / JCM 6121 / CCUG 31486 / LMG 2827 / NBRC 12203 / NCIMB 8253 / ATH 2.4.1.)</name>
    <name type="common">Rhodobacter sphaeroides</name>
    <dbReference type="NCBI Taxonomy" id="272943"/>
    <lineage>
        <taxon>Bacteria</taxon>
        <taxon>Pseudomonadati</taxon>
        <taxon>Pseudomonadota</taxon>
        <taxon>Alphaproteobacteria</taxon>
        <taxon>Rhodobacterales</taxon>
        <taxon>Paracoccaceae</taxon>
        <taxon>Cereibacter</taxon>
    </lineage>
</organism>
<protein>
    <recommendedName>
        <fullName evidence="1">1-deoxy-D-xylulose 5-phosphate reductoisomerase</fullName>
        <shortName evidence="1">DXP reductoisomerase</shortName>
        <ecNumber evidence="1">1.1.1.267</ecNumber>
    </recommendedName>
    <alternativeName>
        <fullName evidence="1">1-deoxyxylulose-5-phosphate reductoisomerase</fullName>
    </alternativeName>
    <alternativeName>
        <fullName evidence="1">2-C-methyl-D-erythritol 4-phosphate synthase</fullName>
    </alternativeName>
</protein>
<accession>Q3J2X1</accession>
<dbReference type="EC" id="1.1.1.267" evidence="1"/>
<dbReference type="EMBL" id="CP000143">
    <property type="protein sequence ID" value="ABA78863.1"/>
    <property type="molecule type" value="Genomic_DNA"/>
</dbReference>
<dbReference type="RefSeq" id="WP_011337676.1">
    <property type="nucleotide sequence ID" value="NC_007493.2"/>
</dbReference>
<dbReference type="RefSeq" id="YP_352764.1">
    <property type="nucleotide sequence ID" value="NC_007493.2"/>
</dbReference>
<dbReference type="SMR" id="Q3J2X1"/>
<dbReference type="STRING" id="272943.RSP_2709"/>
<dbReference type="EnsemblBacteria" id="ABA78863">
    <property type="protein sequence ID" value="ABA78863"/>
    <property type="gene ID" value="RSP_2709"/>
</dbReference>
<dbReference type="GeneID" id="3720438"/>
<dbReference type="KEGG" id="rsp:RSP_2709"/>
<dbReference type="PATRIC" id="fig|272943.9.peg.1635"/>
<dbReference type="eggNOG" id="COG0743">
    <property type="taxonomic scope" value="Bacteria"/>
</dbReference>
<dbReference type="OrthoDB" id="9806546at2"/>
<dbReference type="PhylomeDB" id="Q3J2X1"/>
<dbReference type="UniPathway" id="UPA00056">
    <property type="reaction ID" value="UER00092"/>
</dbReference>
<dbReference type="Proteomes" id="UP000002703">
    <property type="component" value="Chromosome 1"/>
</dbReference>
<dbReference type="GO" id="GO:0030604">
    <property type="term" value="F:1-deoxy-D-xylulose-5-phosphate reductoisomerase activity"/>
    <property type="evidence" value="ECO:0007669"/>
    <property type="project" value="UniProtKB-UniRule"/>
</dbReference>
<dbReference type="GO" id="GO:0030145">
    <property type="term" value="F:manganese ion binding"/>
    <property type="evidence" value="ECO:0007669"/>
    <property type="project" value="TreeGrafter"/>
</dbReference>
<dbReference type="GO" id="GO:0070402">
    <property type="term" value="F:NADPH binding"/>
    <property type="evidence" value="ECO:0007669"/>
    <property type="project" value="InterPro"/>
</dbReference>
<dbReference type="GO" id="GO:0051484">
    <property type="term" value="P:isopentenyl diphosphate biosynthetic process, methylerythritol 4-phosphate pathway involved in terpenoid biosynthetic process"/>
    <property type="evidence" value="ECO:0007669"/>
    <property type="project" value="TreeGrafter"/>
</dbReference>
<dbReference type="FunFam" id="3.40.50.720:FF:000045">
    <property type="entry name" value="1-deoxy-D-xylulose 5-phosphate reductoisomerase"/>
    <property type="match status" value="1"/>
</dbReference>
<dbReference type="Gene3D" id="1.10.1740.10">
    <property type="match status" value="1"/>
</dbReference>
<dbReference type="Gene3D" id="3.40.50.720">
    <property type="entry name" value="NAD(P)-binding Rossmann-like Domain"/>
    <property type="match status" value="1"/>
</dbReference>
<dbReference type="HAMAP" id="MF_00183">
    <property type="entry name" value="DXP_reductoisom"/>
    <property type="match status" value="1"/>
</dbReference>
<dbReference type="InterPro" id="IPR003821">
    <property type="entry name" value="DXP_reductoisomerase"/>
</dbReference>
<dbReference type="InterPro" id="IPR013644">
    <property type="entry name" value="DXP_reductoisomerase_C"/>
</dbReference>
<dbReference type="InterPro" id="IPR013512">
    <property type="entry name" value="DXP_reductoisomerase_N"/>
</dbReference>
<dbReference type="InterPro" id="IPR026877">
    <property type="entry name" value="DXPR_C"/>
</dbReference>
<dbReference type="InterPro" id="IPR036169">
    <property type="entry name" value="DXPR_C_sf"/>
</dbReference>
<dbReference type="InterPro" id="IPR036291">
    <property type="entry name" value="NAD(P)-bd_dom_sf"/>
</dbReference>
<dbReference type="NCBIfam" id="TIGR00243">
    <property type="entry name" value="Dxr"/>
    <property type="match status" value="1"/>
</dbReference>
<dbReference type="PANTHER" id="PTHR30525">
    <property type="entry name" value="1-DEOXY-D-XYLULOSE 5-PHOSPHATE REDUCTOISOMERASE"/>
    <property type="match status" value="1"/>
</dbReference>
<dbReference type="PANTHER" id="PTHR30525:SF0">
    <property type="entry name" value="1-DEOXY-D-XYLULOSE 5-PHOSPHATE REDUCTOISOMERASE, CHLOROPLASTIC"/>
    <property type="match status" value="1"/>
</dbReference>
<dbReference type="Pfam" id="PF08436">
    <property type="entry name" value="DXP_redisom_C"/>
    <property type="match status" value="1"/>
</dbReference>
<dbReference type="Pfam" id="PF02670">
    <property type="entry name" value="DXP_reductoisom"/>
    <property type="match status" value="1"/>
</dbReference>
<dbReference type="Pfam" id="PF13288">
    <property type="entry name" value="DXPR_C"/>
    <property type="match status" value="1"/>
</dbReference>
<dbReference type="PIRSF" id="PIRSF006205">
    <property type="entry name" value="Dxp_reductismrs"/>
    <property type="match status" value="1"/>
</dbReference>
<dbReference type="SUPFAM" id="SSF69055">
    <property type="entry name" value="1-deoxy-D-xylulose-5-phosphate reductoisomerase, C-terminal domain"/>
    <property type="match status" value="1"/>
</dbReference>
<dbReference type="SUPFAM" id="SSF55347">
    <property type="entry name" value="Glyceraldehyde-3-phosphate dehydrogenase-like, C-terminal domain"/>
    <property type="match status" value="1"/>
</dbReference>
<dbReference type="SUPFAM" id="SSF51735">
    <property type="entry name" value="NAD(P)-binding Rossmann-fold domains"/>
    <property type="match status" value="1"/>
</dbReference>
<evidence type="ECO:0000255" key="1">
    <source>
        <dbReference type="HAMAP-Rule" id="MF_00183"/>
    </source>
</evidence>
<proteinExistence type="inferred from homology"/>
<name>DXR_CERS4</name>
<comment type="function">
    <text evidence="1">Catalyzes the NADPH-dependent rearrangement and reduction of 1-deoxy-D-xylulose-5-phosphate (DXP) to 2-C-methyl-D-erythritol 4-phosphate (MEP).</text>
</comment>
<comment type="catalytic activity">
    <reaction evidence="1">
        <text>2-C-methyl-D-erythritol 4-phosphate + NADP(+) = 1-deoxy-D-xylulose 5-phosphate + NADPH + H(+)</text>
        <dbReference type="Rhea" id="RHEA:13717"/>
        <dbReference type="ChEBI" id="CHEBI:15378"/>
        <dbReference type="ChEBI" id="CHEBI:57783"/>
        <dbReference type="ChEBI" id="CHEBI:57792"/>
        <dbReference type="ChEBI" id="CHEBI:58262"/>
        <dbReference type="ChEBI" id="CHEBI:58349"/>
        <dbReference type="EC" id="1.1.1.267"/>
    </reaction>
    <physiologicalReaction direction="right-to-left" evidence="1">
        <dbReference type="Rhea" id="RHEA:13719"/>
    </physiologicalReaction>
</comment>
<comment type="cofactor">
    <cofactor evidence="1">
        <name>Mg(2+)</name>
        <dbReference type="ChEBI" id="CHEBI:18420"/>
    </cofactor>
    <cofactor evidence="1">
        <name>Mn(2+)</name>
        <dbReference type="ChEBI" id="CHEBI:29035"/>
    </cofactor>
</comment>
<comment type="pathway">
    <text evidence="1">Isoprenoid biosynthesis; isopentenyl diphosphate biosynthesis via DXP pathway; isopentenyl diphosphate from 1-deoxy-D-xylulose 5-phosphate: step 1/6.</text>
</comment>
<comment type="similarity">
    <text evidence="1">Belongs to the DXR family.</text>
</comment>
<keyword id="KW-0414">Isoprene biosynthesis</keyword>
<keyword id="KW-0464">Manganese</keyword>
<keyword id="KW-0479">Metal-binding</keyword>
<keyword id="KW-0521">NADP</keyword>
<keyword id="KW-0560">Oxidoreductase</keyword>
<keyword id="KW-1185">Reference proteome</keyword>
<gene>
    <name evidence="1" type="primary">dxr</name>
    <name type="ordered locus">RHOS4_12950</name>
    <name type="ORF">RSP_2709</name>
</gene>
<sequence>MRSLSIFGATGSIGESTFDLVMRKGGPEAFRTVALTGGRNIRRLAEMARALKAELAVTAHEDCLPALREALAGTGTEVAGGAQAIAEAADRPADWTMSAIVGAAGLVPGMRALKHGRTLALANKESLVTAGQLLMRTARENGATILPVDSEHSAVFQALAGEDTACVERVIITASGGPFRDWSLERIRACTVAEAQAHPNWSMGQRISIDSASMFNKALELIETREFFGFEPDRIEAVVHPQSIVHAMVGFCDGGLMAHLGPADMRHAIGFALNWPGRGEVPVARIDLAQIASLTFQRPDEERFPALRLARDVMAARGLSGAAFNAAKEIALDHFIAGRIGFLDMAAVVEETLAGVSTDPLFGKVPDALEEVLAMDHLARRAAEEAAGLRQQKR</sequence>
<reference key="1">
    <citation type="submission" date="2005-09" db="EMBL/GenBank/DDBJ databases">
        <title>Complete sequence of chromosome 1 of Rhodobacter sphaeroides 2.4.1.</title>
        <authorList>
            <person name="Copeland A."/>
            <person name="Lucas S."/>
            <person name="Lapidus A."/>
            <person name="Barry K."/>
            <person name="Detter J.C."/>
            <person name="Glavina T."/>
            <person name="Hammon N."/>
            <person name="Israni S."/>
            <person name="Pitluck S."/>
            <person name="Richardson P."/>
            <person name="Mackenzie C."/>
            <person name="Choudhary M."/>
            <person name="Larimer F."/>
            <person name="Hauser L.J."/>
            <person name="Land M."/>
            <person name="Donohue T.J."/>
            <person name="Kaplan S."/>
        </authorList>
    </citation>
    <scope>NUCLEOTIDE SEQUENCE [LARGE SCALE GENOMIC DNA]</scope>
    <source>
        <strain>ATCC 17023 / DSM 158 / JCM 6121 / CCUG 31486 / LMG 2827 / NBRC 12203 / NCIMB 8253 / ATH 2.4.1.</strain>
    </source>
</reference>
<feature type="chain" id="PRO_1000124110" description="1-deoxy-D-xylulose 5-phosphate reductoisomerase">
    <location>
        <begin position="1"/>
        <end position="394"/>
    </location>
</feature>
<feature type="binding site" evidence="1">
    <location>
        <position position="10"/>
    </location>
    <ligand>
        <name>NADPH</name>
        <dbReference type="ChEBI" id="CHEBI:57783"/>
    </ligand>
</feature>
<feature type="binding site" evidence="1">
    <location>
        <position position="11"/>
    </location>
    <ligand>
        <name>NADPH</name>
        <dbReference type="ChEBI" id="CHEBI:57783"/>
    </ligand>
</feature>
<feature type="binding site" evidence="1">
    <location>
        <position position="12"/>
    </location>
    <ligand>
        <name>NADPH</name>
        <dbReference type="ChEBI" id="CHEBI:57783"/>
    </ligand>
</feature>
<feature type="binding site" evidence="1">
    <location>
        <position position="13"/>
    </location>
    <ligand>
        <name>NADPH</name>
        <dbReference type="ChEBI" id="CHEBI:57783"/>
    </ligand>
</feature>
<feature type="binding site" evidence="1">
    <location>
        <position position="38"/>
    </location>
    <ligand>
        <name>NADPH</name>
        <dbReference type="ChEBI" id="CHEBI:57783"/>
    </ligand>
</feature>
<feature type="binding site" evidence="1">
    <location>
        <position position="39"/>
    </location>
    <ligand>
        <name>NADPH</name>
        <dbReference type="ChEBI" id="CHEBI:57783"/>
    </ligand>
</feature>
<feature type="binding site" evidence="1">
    <location>
        <position position="40"/>
    </location>
    <ligand>
        <name>NADPH</name>
        <dbReference type="ChEBI" id="CHEBI:57783"/>
    </ligand>
</feature>
<feature type="binding site" evidence="1">
    <location>
        <position position="123"/>
    </location>
    <ligand>
        <name>NADPH</name>
        <dbReference type="ChEBI" id="CHEBI:57783"/>
    </ligand>
</feature>
<feature type="binding site" evidence="1">
    <location>
        <position position="124"/>
    </location>
    <ligand>
        <name>1-deoxy-D-xylulose 5-phosphate</name>
        <dbReference type="ChEBI" id="CHEBI:57792"/>
    </ligand>
</feature>
<feature type="binding site" evidence="1">
    <location>
        <position position="125"/>
    </location>
    <ligand>
        <name>NADPH</name>
        <dbReference type="ChEBI" id="CHEBI:57783"/>
    </ligand>
</feature>
<feature type="binding site" evidence="1">
    <location>
        <position position="149"/>
    </location>
    <ligand>
        <name>Mn(2+)</name>
        <dbReference type="ChEBI" id="CHEBI:29035"/>
    </ligand>
</feature>
<feature type="binding site" evidence="1">
    <location>
        <position position="150"/>
    </location>
    <ligand>
        <name>1-deoxy-D-xylulose 5-phosphate</name>
        <dbReference type="ChEBI" id="CHEBI:57792"/>
    </ligand>
</feature>
<feature type="binding site" evidence="1">
    <location>
        <position position="151"/>
    </location>
    <ligand>
        <name>1-deoxy-D-xylulose 5-phosphate</name>
        <dbReference type="ChEBI" id="CHEBI:57792"/>
    </ligand>
</feature>
<feature type="binding site" evidence="1">
    <location>
        <position position="151"/>
    </location>
    <ligand>
        <name>Mn(2+)</name>
        <dbReference type="ChEBI" id="CHEBI:29035"/>
    </ligand>
</feature>
<feature type="binding site" evidence="1">
    <location>
        <position position="175"/>
    </location>
    <ligand>
        <name>1-deoxy-D-xylulose 5-phosphate</name>
        <dbReference type="ChEBI" id="CHEBI:57792"/>
    </ligand>
</feature>
<feature type="binding site" evidence="1">
    <location>
        <position position="198"/>
    </location>
    <ligand>
        <name>1-deoxy-D-xylulose 5-phosphate</name>
        <dbReference type="ChEBI" id="CHEBI:57792"/>
    </ligand>
</feature>
<feature type="binding site" evidence="1">
    <location>
        <position position="204"/>
    </location>
    <ligand>
        <name>NADPH</name>
        <dbReference type="ChEBI" id="CHEBI:57783"/>
    </ligand>
</feature>
<feature type="binding site" evidence="1">
    <location>
        <position position="211"/>
    </location>
    <ligand>
        <name>1-deoxy-D-xylulose 5-phosphate</name>
        <dbReference type="ChEBI" id="CHEBI:57792"/>
    </ligand>
</feature>
<feature type="binding site" evidence="1">
    <location>
        <position position="216"/>
    </location>
    <ligand>
        <name>1-deoxy-D-xylulose 5-phosphate</name>
        <dbReference type="ChEBI" id="CHEBI:57792"/>
    </ligand>
</feature>
<feature type="binding site" evidence="1">
    <location>
        <position position="217"/>
    </location>
    <ligand>
        <name>1-deoxy-D-xylulose 5-phosphate</name>
        <dbReference type="ChEBI" id="CHEBI:57792"/>
    </ligand>
</feature>
<feature type="binding site" evidence="1">
    <location>
        <position position="220"/>
    </location>
    <ligand>
        <name>1-deoxy-D-xylulose 5-phosphate</name>
        <dbReference type="ChEBI" id="CHEBI:57792"/>
    </ligand>
</feature>
<feature type="binding site" evidence="1">
    <location>
        <position position="220"/>
    </location>
    <ligand>
        <name>Mn(2+)</name>
        <dbReference type="ChEBI" id="CHEBI:29035"/>
    </ligand>
</feature>